<feature type="chain" id="PRO_0000354112" description="Catalase-peroxidase">
    <location>
        <begin position="1"/>
        <end position="749"/>
    </location>
</feature>
<feature type="active site" description="Proton acceptor" evidence="1">
    <location>
        <position position="99"/>
    </location>
</feature>
<feature type="binding site" description="axial binding residue" evidence="1">
    <location>
        <position position="275"/>
    </location>
    <ligand>
        <name>heme b</name>
        <dbReference type="ChEBI" id="CHEBI:60344"/>
    </ligand>
    <ligandPart>
        <name>Fe</name>
        <dbReference type="ChEBI" id="CHEBI:18248"/>
    </ligandPart>
</feature>
<feature type="site" description="Transition state stabilizer" evidence="1">
    <location>
        <position position="95"/>
    </location>
</feature>
<feature type="cross-link" description="Tryptophyl-tyrosyl-methioninium (Trp-Tyr) (with M-260)" evidence="1">
    <location>
        <begin position="98"/>
        <end position="234"/>
    </location>
</feature>
<feature type="cross-link" description="Tryptophyl-tyrosyl-methioninium (Tyr-Met) (with W-98)" evidence="1">
    <location>
        <begin position="234"/>
        <end position="260"/>
    </location>
</feature>
<keyword id="KW-0963">Cytoplasm</keyword>
<keyword id="KW-0349">Heme</keyword>
<keyword id="KW-0376">Hydrogen peroxide</keyword>
<keyword id="KW-0408">Iron</keyword>
<keyword id="KW-0479">Metal-binding</keyword>
<keyword id="KW-0560">Oxidoreductase</keyword>
<keyword id="KW-0575">Peroxidase</keyword>
<keyword id="KW-1185">Reference proteome</keyword>
<evidence type="ECO:0000255" key="1">
    <source>
        <dbReference type="HAMAP-Rule" id="MF_03108"/>
    </source>
</evidence>
<gene>
    <name evidence="1" type="primary">katG</name>
    <name type="ORF">UMAG_11067</name>
</gene>
<comment type="function">
    <text evidence="1">Bifunctional enzyme with both catalase and broad-spectrum peroxidase activity.</text>
</comment>
<comment type="catalytic activity">
    <reaction evidence="1">
        <text>H2O2 + AH2 = A + 2 H2O</text>
        <dbReference type="Rhea" id="RHEA:30275"/>
        <dbReference type="ChEBI" id="CHEBI:13193"/>
        <dbReference type="ChEBI" id="CHEBI:15377"/>
        <dbReference type="ChEBI" id="CHEBI:16240"/>
        <dbReference type="ChEBI" id="CHEBI:17499"/>
        <dbReference type="EC" id="1.11.1.21"/>
    </reaction>
</comment>
<comment type="catalytic activity">
    <reaction evidence="1">
        <text>2 H2O2 = O2 + 2 H2O</text>
        <dbReference type="Rhea" id="RHEA:20309"/>
        <dbReference type="ChEBI" id="CHEBI:15377"/>
        <dbReference type="ChEBI" id="CHEBI:15379"/>
        <dbReference type="ChEBI" id="CHEBI:16240"/>
        <dbReference type="EC" id="1.11.1.21"/>
    </reaction>
</comment>
<comment type="cofactor">
    <cofactor evidence="1">
        <name>heme b</name>
        <dbReference type="ChEBI" id="CHEBI:60344"/>
    </cofactor>
    <text evidence="1">Binds 1 heme b (iron(II)-protoporphyrin IX) group per monomer.</text>
</comment>
<comment type="subunit">
    <text evidence="1">Homodimer or homotetramer.</text>
</comment>
<comment type="subcellular location">
    <subcellularLocation>
        <location evidence="1">Cytoplasm</location>
    </subcellularLocation>
</comment>
<comment type="PTM">
    <text evidence="1">Formation of the three residue Trp-Tyr-Met cross-link is important for the catalase, but not the peroxidase activity of the enzyme.</text>
</comment>
<comment type="similarity">
    <text evidence="1">Belongs to the peroxidase family. Peroxidase/catalase subfamily.</text>
</comment>
<accession>Q4P914</accession>
<accession>A0A0D1E0R0</accession>
<proteinExistence type="inferred from homology"/>
<organism>
    <name type="scientific">Mycosarcoma maydis</name>
    <name type="common">Corn smut fungus</name>
    <name type="synonym">Ustilago maydis</name>
    <dbReference type="NCBI Taxonomy" id="5270"/>
    <lineage>
        <taxon>Eukaryota</taxon>
        <taxon>Fungi</taxon>
        <taxon>Dikarya</taxon>
        <taxon>Basidiomycota</taxon>
        <taxon>Ustilaginomycotina</taxon>
        <taxon>Ustilaginomycetes</taxon>
        <taxon>Ustilaginales</taxon>
        <taxon>Ustilaginaceae</taxon>
        <taxon>Mycosarcoma</taxon>
    </lineage>
</organism>
<reference key="1">
    <citation type="journal article" date="2006" name="Nature">
        <title>Insights from the genome of the biotrophic fungal plant pathogen Ustilago maydis.</title>
        <authorList>
            <person name="Kaemper J."/>
            <person name="Kahmann R."/>
            <person name="Boelker M."/>
            <person name="Ma L.-J."/>
            <person name="Brefort T."/>
            <person name="Saville B.J."/>
            <person name="Banuett F."/>
            <person name="Kronstad J.W."/>
            <person name="Gold S.E."/>
            <person name="Mueller O."/>
            <person name="Perlin M.H."/>
            <person name="Woesten H.A.B."/>
            <person name="de Vries R."/>
            <person name="Ruiz-Herrera J."/>
            <person name="Reynaga-Pena C.G."/>
            <person name="Snetselaar K."/>
            <person name="McCann M."/>
            <person name="Perez-Martin J."/>
            <person name="Feldbruegge M."/>
            <person name="Basse C.W."/>
            <person name="Steinberg G."/>
            <person name="Ibeas J.I."/>
            <person name="Holloman W."/>
            <person name="Guzman P."/>
            <person name="Farman M.L."/>
            <person name="Stajich J.E."/>
            <person name="Sentandreu R."/>
            <person name="Gonzalez-Prieto J.M."/>
            <person name="Kennell J.C."/>
            <person name="Molina L."/>
            <person name="Schirawski J."/>
            <person name="Mendoza-Mendoza A."/>
            <person name="Greilinger D."/>
            <person name="Muench K."/>
            <person name="Roessel N."/>
            <person name="Scherer M."/>
            <person name="Vranes M."/>
            <person name="Ladendorf O."/>
            <person name="Vincon V."/>
            <person name="Fuchs U."/>
            <person name="Sandrock B."/>
            <person name="Meng S."/>
            <person name="Ho E.C.H."/>
            <person name="Cahill M.J."/>
            <person name="Boyce K.J."/>
            <person name="Klose J."/>
            <person name="Klosterman S.J."/>
            <person name="Deelstra H.J."/>
            <person name="Ortiz-Castellanos L."/>
            <person name="Li W."/>
            <person name="Sanchez-Alonso P."/>
            <person name="Schreier P.H."/>
            <person name="Haeuser-Hahn I."/>
            <person name="Vaupel M."/>
            <person name="Koopmann E."/>
            <person name="Friedrich G."/>
            <person name="Voss H."/>
            <person name="Schlueter T."/>
            <person name="Margolis J."/>
            <person name="Platt D."/>
            <person name="Swimmer C."/>
            <person name="Gnirke A."/>
            <person name="Chen F."/>
            <person name="Vysotskaia V."/>
            <person name="Mannhaupt G."/>
            <person name="Gueldener U."/>
            <person name="Muensterkoetter M."/>
            <person name="Haase D."/>
            <person name="Oesterheld M."/>
            <person name="Mewes H.-W."/>
            <person name="Mauceli E.W."/>
            <person name="DeCaprio D."/>
            <person name="Wade C.M."/>
            <person name="Butler J."/>
            <person name="Young S.K."/>
            <person name="Jaffe D.B."/>
            <person name="Calvo S.E."/>
            <person name="Nusbaum C."/>
            <person name="Galagan J.E."/>
            <person name="Birren B.W."/>
        </authorList>
    </citation>
    <scope>NUCLEOTIDE SEQUENCE [LARGE SCALE GENOMIC DNA]</scope>
    <source>
        <strain>DSM 14603 / FGSC 9021 / UM521</strain>
    </source>
</reference>
<reference key="2">
    <citation type="submission" date="2014-09" db="EMBL/GenBank/DDBJ databases">
        <authorList>
            <person name="Gueldener U."/>
            <person name="Muensterkoetter M."/>
            <person name="Walter M.C."/>
            <person name="Mannhaupt G."/>
            <person name="Kahmann R."/>
        </authorList>
    </citation>
    <scope>GENOME REANNOTATION</scope>
    <source>
        <strain>DSM 14603 / FGSC 9021 / UM521</strain>
    </source>
</reference>
<sequence length="749" mass="82770">MGECPFAHQANVDRKRVPAAGFGTKNSDWWPNAVKLNVLRQHQAKSDPFNAEFDYAAAFNSLDYDALKKDLTHLMTDSQDWWPADYGHYGGFFIRMSWHAAGTYRVQDGRGGGGEGQQRFAPLNSWPDNGNLDKARRLLWPIKQKYGNKISWADLLLLAGNVALESMGFKTFGFAGGRADTWEADQSTYWGGETTWLANDVRYEEGTKNGGDINDLKNRNLDHALAASHMGLIYVNPEGPNGEPDPVAAAHDIRTTFGRMAMNDEETVALIAGGHTFGKTHGAGNPDLVGPEPNGAPIEAQGFGWTSKHGSGKAGDAITSGLEVVWTSKPTEWSNLYLKYLFEFEWEHDKSPAGANQFVAKNADAIIPDPFDPSKKRRPTMLTTDLSLRYDPAYEKISRRFLENHDEFADAFARAWFQLLHRDMGPRARWLGPEVPKEILIWEDPVPTADYALVDDRDLAGLKQAIFATGVEPSKFLATAWASAASYRDSDKRGGANGARIRLAPMKDWEVNNPQQLAEVIKALEGVQQQFNSSNQGGKKISIADLIVLAGNAALEKASGLPVPFTPGRTDATQEQTEVDTFEFLKPVADGFRNYGQSTDRVCAEQILIDRANLLTLTPPELTVLIGGLRALGLNYNGSSHGVLTHRRGQLSNDFFVNLLDMSTEWKAADGGKGEVFDGVDRKSGQKKWSATRADLVFGSQAELRALAENYAQADNADKFKKDFVTAWNKVMNLDRFDVKKSNIARARF</sequence>
<dbReference type="EC" id="1.11.1.21" evidence="1"/>
<dbReference type="EMBL" id="CM003148">
    <property type="protein sequence ID" value="KIS68300.1"/>
    <property type="molecule type" value="Genomic_DNA"/>
</dbReference>
<dbReference type="RefSeq" id="XP_011390075.1">
    <property type="nucleotide sequence ID" value="XM_011391773.1"/>
</dbReference>
<dbReference type="SMR" id="Q4P914"/>
<dbReference type="STRING" id="237631.Q4P914"/>
<dbReference type="PeroxiBase" id="2327">
    <property type="entry name" value="UmCP01"/>
</dbReference>
<dbReference type="EnsemblFungi" id="KIS68300">
    <property type="protein sequence ID" value="KIS68300"/>
    <property type="gene ID" value="UMAG_11067"/>
</dbReference>
<dbReference type="GeneID" id="23566997"/>
<dbReference type="KEGG" id="uma:UMAG_11067"/>
<dbReference type="VEuPathDB" id="FungiDB:UMAG_11067"/>
<dbReference type="eggNOG" id="ENOG502QTDY">
    <property type="taxonomic scope" value="Eukaryota"/>
</dbReference>
<dbReference type="InParanoid" id="Q4P914"/>
<dbReference type="OrthoDB" id="407695at2759"/>
<dbReference type="Proteomes" id="UP000000561">
    <property type="component" value="Chromosome 9"/>
</dbReference>
<dbReference type="GO" id="GO:0005829">
    <property type="term" value="C:cytosol"/>
    <property type="evidence" value="ECO:0000318"/>
    <property type="project" value="GO_Central"/>
</dbReference>
<dbReference type="GO" id="GO:0004096">
    <property type="term" value="F:catalase activity"/>
    <property type="evidence" value="ECO:0000318"/>
    <property type="project" value="GO_Central"/>
</dbReference>
<dbReference type="GO" id="GO:0020037">
    <property type="term" value="F:heme binding"/>
    <property type="evidence" value="ECO:0000318"/>
    <property type="project" value="GO_Central"/>
</dbReference>
<dbReference type="GO" id="GO:0046872">
    <property type="term" value="F:metal ion binding"/>
    <property type="evidence" value="ECO:0007669"/>
    <property type="project" value="UniProtKB-KW"/>
</dbReference>
<dbReference type="GO" id="GO:0070301">
    <property type="term" value="P:cellular response to hydrogen peroxide"/>
    <property type="evidence" value="ECO:0000318"/>
    <property type="project" value="GO_Central"/>
</dbReference>
<dbReference type="GO" id="GO:0042744">
    <property type="term" value="P:hydrogen peroxide catabolic process"/>
    <property type="evidence" value="ECO:0000318"/>
    <property type="project" value="GO_Central"/>
</dbReference>
<dbReference type="CDD" id="cd00649">
    <property type="entry name" value="catalase_peroxidase_1"/>
    <property type="match status" value="1"/>
</dbReference>
<dbReference type="CDD" id="cd08200">
    <property type="entry name" value="catalase_peroxidase_2"/>
    <property type="match status" value="1"/>
</dbReference>
<dbReference type="FunFam" id="1.10.420.10:FF:000002">
    <property type="entry name" value="Catalase-peroxidase"/>
    <property type="match status" value="1"/>
</dbReference>
<dbReference type="FunFam" id="1.10.420.10:FF:000004">
    <property type="entry name" value="Catalase-peroxidase"/>
    <property type="match status" value="1"/>
</dbReference>
<dbReference type="FunFam" id="1.10.520.10:FF:000002">
    <property type="entry name" value="Catalase-peroxidase"/>
    <property type="match status" value="1"/>
</dbReference>
<dbReference type="Gene3D" id="1.10.520.10">
    <property type="match status" value="2"/>
</dbReference>
<dbReference type="Gene3D" id="1.10.420.10">
    <property type="entry name" value="Peroxidase, domain 2"/>
    <property type="match status" value="2"/>
</dbReference>
<dbReference type="HAMAP" id="MF_01961">
    <property type="entry name" value="Catal_peroxid"/>
    <property type="match status" value="1"/>
</dbReference>
<dbReference type="InterPro" id="IPR000763">
    <property type="entry name" value="Catalase_peroxidase"/>
</dbReference>
<dbReference type="InterPro" id="IPR002016">
    <property type="entry name" value="Haem_peroxidase"/>
</dbReference>
<dbReference type="InterPro" id="IPR010255">
    <property type="entry name" value="Haem_peroxidase_sf"/>
</dbReference>
<dbReference type="InterPro" id="IPR019794">
    <property type="entry name" value="Peroxidases_AS"/>
</dbReference>
<dbReference type="InterPro" id="IPR019793">
    <property type="entry name" value="Peroxidases_heam-ligand_BS"/>
</dbReference>
<dbReference type="NCBIfam" id="TIGR00198">
    <property type="entry name" value="cat_per_HPI"/>
    <property type="match status" value="1"/>
</dbReference>
<dbReference type="NCBIfam" id="NF011635">
    <property type="entry name" value="PRK15061.1"/>
    <property type="match status" value="1"/>
</dbReference>
<dbReference type="PANTHER" id="PTHR30555:SF0">
    <property type="entry name" value="CATALASE-PEROXIDASE"/>
    <property type="match status" value="1"/>
</dbReference>
<dbReference type="PANTHER" id="PTHR30555">
    <property type="entry name" value="HYDROPEROXIDASE I, BIFUNCTIONAL CATALASE-PEROXIDASE"/>
    <property type="match status" value="1"/>
</dbReference>
<dbReference type="Pfam" id="PF00141">
    <property type="entry name" value="peroxidase"/>
    <property type="match status" value="2"/>
</dbReference>
<dbReference type="PRINTS" id="PR00460">
    <property type="entry name" value="BPEROXIDASE"/>
</dbReference>
<dbReference type="PRINTS" id="PR00458">
    <property type="entry name" value="PEROXIDASE"/>
</dbReference>
<dbReference type="SUPFAM" id="SSF48113">
    <property type="entry name" value="Heme-dependent peroxidases"/>
    <property type="match status" value="2"/>
</dbReference>
<dbReference type="PROSITE" id="PS00435">
    <property type="entry name" value="PEROXIDASE_1"/>
    <property type="match status" value="1"/>
</dbReference>
<dbReference type="PROSITE" id="PS00436">
    <property type="entry name" value="PEROXIDASE_2"/>
    <property type="match status" value="1"/>
</dbReference>
<dbReference type="PROSITE" id="PS50873">
    <property type="entry name" value="PEROXIDASE_4"/>
    <property type="match status" value="2"/>
</dbReference>
<name>KATG_MYCMD</name>
<protein>
    <recommendedName>
        <fullName evidence="1">Catalase-peroxidase</fullName>
        <shortName evidence="1">CP</shortName>
        <ecNumber evidence="1">1.11.1.21</ecNumber>
    </recommendedName>
    <alternativeName>
        <fullName evidence="1">Peroxidase/catalase</fullName>
    </alternativeName>
</protein>